<protein>
    <recommendedName>
        <fullName evidence="1">PhoP/PhoQ regulator MgrB</fullName>
    </recommendedName>
</protein>
<keyword id="KW-0997">Cell inner membrane</keyword>
<keyword id="KW-1003">Cell membrane</keyword>
<keyword id="KW-0472">Membrane</keyword>
<keyword id="KW-1185">Reference proteome</keyword>
<keyword id="KW-0812">Transmembrane</keyword>
<keyword id="KW-1133">Transmembrane helix</keyword>
<accession>B7USK2</accession>
<gene>
    <name evidence="1" type="primary">mgrB</name>
    <name type="ordered locus">E2348C_1950</name>
</gene>
<comment type="function">
    <text evidence="1">PhoP-regulated transcription is redox-sensitive, being activated when the periplasm becomes more reducing. MgrB acts between DsbA/DsbB and PhoP/PhoQ in this pathway. Represses PhoP/PhoQ signaling, possibly by binding to the periplasmic domain of PhoQ, altering its activity and that of downstream effector PhoP.</text>
</comment>
<comment type="subunit">
    <text evidence="1">May form homooligomers. Probably interacts with the periplasmic domain of PhoQ.</text>
</comment>
<comment type="subcellular location">
    <subcellularLocation>
        <location evidence="1">Cell inner membrane</location>
        <topology evidence="1">Single-pass membrane protein</topology>
    </subcellularLocation>
</comment>
<comment type="similarity">
    <text evidence="1">Belongs to the MgrB family.</text>
</comment>
<organism>
    <name type="scientific">Escherichia coli O127:H6 (strain E2348/69 / EPEC)</name>
    <dbReference type="NCBI Taxonomy" id="574521"/>
    <lineage>
        <taxon>Bacteria</taxon>
        <taxon>Pseudomonadati</taxon>
        <taxon>Pseudomonadota</taxon>
        <taxon>Gammaproteobacteria</taxon>
        <taxon>Enterobacterales</taxon>
        <taxon>Enterobacteriaceae</taxon>
        <taxon>Escherichia</taxon>
    </lineage>
</organism>
<dbReference type="EMBL" id="FM180568">
    <property type="protein sequence ID" value="CAS09498.1"/>
    <property type="molecule type" value="Genomic_DNA"/>
</dbReference>
<dbReference type="RefSeq" id="WP_000714544.1">
    <property type="nucleotide sequence ID" value="NC_011601.1"/>
</dbReference>
<dbReference type="KEGG" id="ecg:E2348C_1950"/>
<dbReference type="HOGENOM" id="CLU_208030_1_0_6"/>
<dbReference type="Proteomes" id="UP000008205">
    <property type="component" value="Chromosome"/>
</dbReference>
<dbReference type="GO" id="GO:0005886">
    <property type="term" value="C:plasma membrane"/>
    <property type="evidence" value="ECO:0007669"/>
    <property type="project" value="UniProtKB-SubCell"/>
</dbReference>
<dbReference type="GO" id="GO:0070298">
    <property type="term" value="P:negative regulation of phosphorelay signal transduction system"/>
    <property type="evidence" value="ECO:0007669"/>
    <property type="project" value="UniProtKB-UniRule"/>
</dbReference>
<dbReference type="HAMAP" id="MF_01596">
    <property type="entry name" value="MgrB"/>
    <property type="match status" value="1"/>
</dbReference>
<dbReference type="InterPro" id="IPR020907">
    <property type="entry name" value="MgrB"/>
</dbReference>
<dbReference type="NCBIfam" id="NF007635">
    <property type="entry name" value="PRK10299.1"/>
    <property type="match status" value="1"/>
</dbReference>
<dbReference type="Pfam" id="PF13998">
    <property type="entry name" value="MgrB"/>
    <property type="match status" value="1"/>
</dbReference>
<dbReference type="PROSITE" id="PS51257">
    <property type="entry name" value="PROKAR_LIPOPROTEIN"/>
    <property type="match status" value="1"/>
</dbReference>
<evidence type="ECO:0000255" key="1">
    <source>
        <dbReference type="HAMAP-Rule" id="MF_01596"/>
    </source>
</evidence>
<feature type="chain" id="PRO_1000185764" description="PhoP/PhoQ regulator MgrB">
    <location>
        <begin position="1"/>
        <end position="47"/>
    </location>
</feature>
<feature type="transmembrane region" description="Helical" evidence="1">
    <location>
        <begin position="6"/>
        <end position="26"/>
    </location>
</feature>
<proteinExistence type="inferred from homology"/>
<reference key="1">
    <citation type="journal article" date="2009" name="J. Bacteriol.">
        <title>Complete genome sequence and comparative genome analysis of enteropathogenic Escherichia coli O127:H6 strain E2348/69.</title>
        <authorList>
            <person name="Iguchi A."/>
            <person name="Thomson N.R."/>
            <person name="Ogura Y."/>
            <person name="Saunders D."/>
            <person name="Ooka T."/>
            <person name="Henderson I.R."/>
            <person name="Harris D."/>
            <person name="Asadulghani M."/>
            <person name="Kurokawa K."/>
            <person name="Dean P."/>
            <person name="Kenny B."/>
            <person name="Quail M.A."/>
            <person name="Thurston S."/>
            <person name="Dougan G."/>
            <person name="Hayashi T."/>
            <person name="Parkhill J."/>
            <person name="Frankel G."/>
        </authorList>
    </citation>
    <scope>NUCLEOTIDE SEQUENCE [LARGE SCALE GENOMIC DNA]</scope>
    <source>
        <strain>E2348/69 / EPEC</strain>
    </source>
</reference>
<name>MGRB_ECO27</name>
<sequence length="47" mass="5524">MKKFRWVALVVVVLACLLLWAQVFNMMCDQDVQFFSGICAINQFIPW</sequence>